<feature type="signal peptide" evidence="1">
    <location>
        <begin position="1"/>
        <end position="19"/>
    </location>
</feature>
<feature type="peptide" id="PRO_0000015965" description="Bombyxin A-2 B chain">
    <location>
        <begin position="20"/>
        <end position="47"/>
    </location>
</feature>
<feature type="propeptide" id="PRO_0000015966" description="C peptide like">
    <location>
        <begin position="50"/>
        <end position="68"/>
    </location>
</feature>
<feature type="peptide" id="PRO_0000015967" description="Bombyxin A-2 A chain">
    <location>
        <begin position="70"/>
        <end position="89"/>
    </location>
</feature>
<feature type="modified residue" description="Pyrrolidone carboxylic acid" evidence="1">
    <location>
        <position position="20"/>
    </location>
</feature>
<feature type="disulfide bond" description="Interchain (between B and A chains)" evidence="1">
    <location>
        <begin position="29"/>
        <end position="76"/>
    </location>
</feature>
<feature type="disulfide bond" description="Interchain (between B and A chains)" evidence="1">
    <location>
        <begin position="41"/>
        <end position="89"/>
    </location>
</feature>
<feature type="disulfide bond" evidence="2">
    <location>
        <begin position="75"/>
        <end position="80"/>
    </location>
</feature>
<feature type="helix" evidence="4">
    <location>
        <begin position="72"/>
        <end position="75"/>
    </location>
</feature>
<feature type="turn" evidence="4">
    <location>
        <begin position="81"/>
        <end position="88"/>
    </location>
</feature>
<proteinExistence type="evidence at protein level"/>
<accession>P15411</accession>
<name>BXA2_BOMMO</name>
<protein>
    <recommendedName>
        <fullName>Bombyxin A-2</fullName>
        <shortName>BBX-A2</shortName>
    </recommendedName>
    <alternativeName>
        <fullName>4K-prothoracicotropic hormone</fullName>
        <shortName>4K-PTTH</shortName>
    </alternativeName>
    <component>
        <recommendedName>
            <fullName>Bombyxin A-2 B chain</fullName>
        </recommendedName>
    </component>
    <component>
        <recommendedName>
            <fullName>Bombyxin A-2 A chain</fullName>
        </recommendedName>
    </component>
</protein>
<dbReference type="EMBL" id="J04727">
    <property type="protein sequence ID" value="AAA27822.1"/>
    <property type="molecule type" value="mRNA"/>
</dbReference>
<dbReference type="EMBL" id="M26068">
    <property type="protein sequence ID" value="AAA27825.1"/>
    <property type="molecule type" value="Genomic_DNA"/>
</dbReference>
<dbReference type="PIR" id="A41391">
    <property type="entry name" value="IPMTA2"/>
</dbReference>
<dbReference type="RefSeq" id="NP_001103771.1">
    <property type="nucleotide sequence ID" value="NM_001110301.1"/>
</dbReference>
<dbReference type="PDB" id="1BOM">
    <property type="method" value="NMR"/>
    <property type="chains" value="A=70-89"/>
</dbReference>
<dbReference type="PDB" id="1BON">
    <property type="method" value="NMR"/>
    <property type="chains" value="A=70-89"/>
</dbReference>
<dbReference type="PDBsum" id="1BOM"/>
<dbReference type="PDBsum" id="1BON"/>
<dbReference type="SMR" id="P15411"/>
<dbReference type="FunCoup" id="P15411">
    <property type="interactions" value="162"/>
</dbReference>
<dbReference type="STRING" id="7091.P15411"/>
<dbReference type="PaxDb" id="7091-BGIBMGA014494-TA"/>
<dbReference type="EnsemblMetazoa" id="NM_001110301.1">
    <property type="protein sequence ID" value="NP_001103771.1"/>
    <property type="gene ID" value="GeneID_693012"/>
</dbReference>
<dbReference type="GeneID" id="693012"/>
<dbReference type="KEGG" id="bmor:693012"/>
<dbReference type="CTD" id="693012"/>
<dbReference type="HOGENOM" id="CLU_125164_2_0_1"/>
<dbReference type="InParanoid" id="P15411"/>
<dbReference type="OrthoDB" id="493443at7088"/>
<dbReference type="EvolutionaryTrace" id="P15411"/>
<dbReference type="Proteomes" id="UP000005204">
    <property type="component" value="Unassembled WGS sequence"/>
</dbReference>
<dbReference type="GO" id="GO:0005615">
    <property type="term" value="C:extracellular space"/>
    <property type="evidence" value="ECO:0007669"/>
    <property type="project" value="InterPro"/>
</dbReference>
<dbReference type="GO" id="GO:0008083">
    <property type="term" value="F:growth factor activity"/>
    <property type="evidence" value="ECO:0007669"/>
    <property type="project" value="InterPro"/>
</dbReference>
<dbReference type="GO" id="GO:0005179">
    <property type="term" value="F:hormone activity"/>
    <property type="evidence" value="ECO:0007669"/>
    <property type="project" value="UniProtKB-KW"/>
</dbReference>
<dbReference type="CDD" id="cd04366">
    <property type="entry name" value="IlGF_insulin_bombyxin_like"/>
    <property type="match status" value="1"/>
</dbReference>
<dbReference type="Gene3D" id="1.10.100.10">
    <property type="entry name" value="Insulin-like"/>
    <property type="match status" value="1"/>
</dbReference>
<dbReference type="InterPro" id="IPR017097">
    <property type="entry name" value="Bombyxin"/>
</dbReference>
<dbReference type="InterPro" id="IPR030680">
    <property type="entry name" value="Bombyxin_A"/>
</dbReference>
<dbReference type="InterPro" id="IPR016179">
    <property type="entry name" value="Insulin-like"/>
</dbReference>
<dbReference type="InterPro" id="IPR036438">
    <property type="entry name" value="Insulin-like_sf"/>
</dbReference>
<dbReference type="InterPro" id="IPR022353">
    <property type="entry name" value="Insulin_CS"/>
</dbReference>
<dbReference type="InterPro" id="IPR022352">
    <property type="entry name" value="Insulin_family"/>
</dbReference>
<dbReference type="PANTHER" id="PTHR13647:SF4">
    <property type="entry name" value="INSULIN-LIKE PEPTIDE 1-RELATED"/>
    <property type="match status" value="1"/>
</dbReference>
<dbReference type="PANTHER" id="PTHR13647">
    <property type="entry name" value="INSULIN-LIKE PEPTIDE 2-RELATED"/>
    <property type="match status" value="1"/>
</dbReference>
<dbReference type="Pfam" id="PF00049">
    <property type="entry name" value="Insulin"/>
    <property type="match status" value="1"/>
</dbReference>
<dbReference type="PIRSF" id="PIRSF037038">
    <property type="entry name" value="Bombyxin"/>
    <property type="match status" value="1"/>
</dbReference>
<dbReference type="PIRSF" id="PIRSF500312">
    <property type="entry name" value="Bombyxin_A"/>
    <property type="match status" value="1"/>
</dbReference>
<dbReference type="PRINTS" id="PR02003">
    <property type="entry name" value="BOMBYXIN"/>
</dbReference>
<dbReference type="PRINTS" id="PR00276">
    <property type="entry name" value="INSULINFAMLY"/>
</dbReference>
<dbReference type="SMART" id="SM00078">
    <property type="entry name" value="IlGF"/>
    <property type="match status" value="1"/>
</dbReference>
<dbReference type="SUPFAM" id="SSF56994">
    <property type="entry name" value="Insulin-like"/>
    <property type="match status" value="1"/>
</dbReference>
<dbReference type="PROSITE" id="PS00262">
    <property type="entry name" value="INSULIN"/>
    <property type="match status" value="1"/>
</dbReference>
<organism>
    <name type="scientific">Bombyx mori</name>
    <name type="common">Silk moth</name>
    <dbReference type="NCBI Taxonomy" id="7091"/>
    <lineage>
        <taxon>Eukaryota</taxon>
        <taxon>Metazoa</taxon>
        <taxon>Ecdysozoa</taxon>
        <taxon>Arthropoda</taxon>
        <taxon>Hexapoda</taxon>
        <taxon>Insecta</taxon>
        <taxon>Pterygota</taxon>
        <taxon>Neoptera</taxon>
        <taxon>Endopterygota</taxon>
        <taxon>Lepidoptera</taxon>
        <taxon>Glossata</taxon>
        <taxon>Ditrysia</taxon>
        <taxon>Bombycoidea</taxon>
        <taxon>Bombycidae</taxon>
        <taxon>Bombycinae</taxon>
        <taxon>Bombyx</taxon>
    </lineage>
</organism>
<gene>
    <name type="primary">BBXA2</name>
</gene>
<comment type="function">
    <text>Brain peptide responsible for activation of prothoracic glands to produce ecdysone in insects.</text>
</comment>
<comment type="subunit">
    <text>Heterodimer of a B chain and an A chain linked by two disulfide bonds.</text>
</comment>
<comment type="subcellular location">
    <subcellularLocation>
        <location>Secreted</location>
    </subcellularLocation>
</comment>
<comment type="miscellaneous">
    <text>Silk worm has two kinds of PTTH: 4K-PTTH and 22K-PTTH; there are many forms of 4K-PTTH.</text>
</comment>
<comment type="similarity">
    <text evidence="3">Belongs to the insulin family.</text>
</comment>
<sequence>MKILLAIALMLSTVMWVSTQQPQEVHTYCGRHLARTMADLCWEEGVDKRSDAQFASYGSAWLMPYSAGRGIVDECCLRPCSVDVLLSYC</sequence>
<evidence type="ECO:0000250" key="1"/>
<evidence type="ECO:0000269" key="2">
    <source>
    </source>
</evidence>
<evidence type="ECO:0000305" key="3"/>
<evidence type="ECO:0007829" key="4">
    <source>
        <dbReference type="PDB" id="1BOM"/>
    </source>
</evidence>
<keyword id="KW-0002">3D-structure</keyword>
<keyword id="KW-0165">Cleavage on pair of basic residues</keyword>
<keyword id="KW-1015">Disulfide bond</keyword>
<keyword id="KW-0372">Hormone</keyword>
<keyword id="KW-0873">Pyrrolidone carboxylic acid</keyword>
<keyword id="KW-1185">Reference proteome</keyword>
<keyword id="KW-0964">Secreted</keyword>
<keyword id="KW-0732">Signal</keyword>
<reference key="1">
    <citation type="journal article" date="1989" name="J. Biol. Chem.">
        <title>cDNA structure and expression of bombyxin, an insulin-like brain secretory peptide of the silkmoth Bombyx mori.</title>
        <authorList>
            <person name="Adachi T."/>
            <person name="Takiya S."/>
            <person name="Suzuki Y."/>
            <person name="Iwami M."/>
            <person name="Kawakami A."/>
            <person name="Takahashi S.Y."/>
            <person name="Ishizaki H."/>
            <person name="Nagasawa H."/>
            <person name="Suzuki A."/>
        </authorList>
    </citation>
    <scope>NUCLEOTIDE SEQUENCE [MRNA]</scope>
</reference>
<reference key="2">
    <citation type="journal article" date="1989" name="Proc. Natl. Acad. Sci. U.S.A.">
        <title>Structure and organization of four clustered genes that encode bombyxin, an insulin-related brain secretory peptide of the silkmoth Bombyx mori.</title>
        <authorList>
            <person name="Kawakami A."/>
            <person name="Iwami M."/>
            <person name="Nagasawa H."/>
            <person name="Suzuki A."/>
            <person name="Ishizaki H."/>
        </authorList>
    </citation>
    <scope>NUCLEOTIDE SEQUENCE [GENOMIC DNA]</scope>
</reference>
<reference key="3">
    <citation type="journal article" date="1995" name="J. Mol. Biol.">
        <title>Three-dimensional solution structure of bombyxin-II an insulin-like peptide of the silkmoth Bombyx mori: structural comparison with insulin and relaxin.</title>
        <authorList>
            <person name="Nagata K."/>
            <person name="Hatanaka H."/>
            <person name="Kohda D."/>
            <person name="Kataoka H."/>
            <person name="Nagasawa H."/>
            <person name="Isogai A."/>
            <person name="Ishizaki H."/>
            <person name="Suzuki A."/>
            <person name="Inagaki F."/>
        </authorList>
    </citation>
    <scope>STRUCTURE BY NMR OF 70-89</scope>
    <scope>DISULFIDE BOND</scope>
</reference>